<organism>
    <name type="scientific">Heliobacterium modesticaldum (strain ATCC 51547 / Ice1)</name>
    <dbReference type="NCBI Taxonomy" id="498761"/>
    <lineage>
        <taxon>Bacteria</taxon>
        <taxon>Bacillati</taxon>
        <taxon>Bacillota</taxon>
        <taxon>Clostridia</taxon>
        <taxon>Eubacteriales</taxon>
        <taxon>Heliobacteriaceae</taxon>
        <taxon>Heliomicrobium</taxon>
    </lineage>
</organism>
<reference key="1">
    <citation type="journal article" date="2008" name="J. Bacteriol.">
        <title>The genome of Heliobacterium modesticaldum, a phototrophic representative of the Firmicutes containing the simplest photosynthetic apparatus.</title>
        <authorList>
            <person name="Sattley W.M."/>
            <person name="Madigan M.T."/>
            <person name="Swingley W.D."/>
            <person name="Cheung P.C."/>
            <person name="Clocksin K.M."/>
            <person name="Conrad A.L."/>
            <person name="Dejesa L.C."/>
            <person name="Honchak B.M."/>
            <person name="Jung D.O."/>
            <person name="Karbach L.E."/>
            <person name="Kurdoglu A."/>
            <person name="Lahiri S."/>
            <person name="Mastrian S.D."/>
            <person name="Page L.E."/>
            <person name="Taylor H.L."/>
            <person name="Wang Z.T."/>
            <person name="Raymond J."/>
            <person name="Chen M."/>
            <person name="Blankenship R.E."/>
            <person name="Touchman J.W."/>
        </authorList>
    </citation>
    <scope>NUCLEOTIDE SEQUENCE [LARGE SCALE GENOMIC DNA]</scope>
    <source>
        <strain>ATCC 51547 / Ice1</strain>
    </source>
</reference>
<gene>
    <name evidence="1" type="primary">rpmG</name>
    <name type="ordered locus">Helmi_13140</name>
    <name type="ORF">HM1_1362</name>
</gene>
<evidence type="ECO:0000255" key="1">
    <source>
        <dbReference type="HAMAP-Rule" id="MF_00294"/>
    </source>
</evidence>
<evidence type="ECO:0000305" key="2"/>
<feature type="chain" id="PRO_0000356483" description="Large ribosomal subunit protein bL33">
    <location>
        <begin position="1"/>
        <end position="49"/>
    </location>
</feature>
<dbReference type="EMBL" id="CP000930">
    <property type="protein sequence ID" value="ABZ83939.1"/>
    <property type="molecule type" value="Genomic_DNA"/>
</dbReference>
<dbReference type="RefSeq" id="WP_012282455.1">
    <property type="nucleotide sequence ID" value="NC_010337.2"/>
</dbReference>
<dbReference type="SMR" id="B0TC40"/>
<dbReference type="STRING" id="498761.HM1_1362"/>
<dbReference type="KEGG" id="hmo:HM1_1362"/>
<dbReference type="eggNOG" id="COG0267">
    <property type="taxonomic scope" value="Bacteria"/>
</dbReference>
<dbReference type="HOGENOM" id="CLU_190949_0_2_9"/>
<dbReference type="OrthoDB" id="9801333at2"/>
<dbReference type="Proteomes" id="UP000008550">
    <property type="component" value="Chromosome"/>
</dbReference>
<dbReference type="GO" id="GO:0005737">
    <property type="term" value="C:cytoplasm"/>
    <property type="evidence" value="ECO:0007669"/>
    <property type="project" value="UniProtKB-ARBA"/>
</dbReference>
<dbReference type="GO" id="GO:1990904">
    <property type="term" value="C:ribonucleoprotein complex"/>
    <property type="evidence" value="ECO:0007669"/>
    <property type="project" value="UniProtKB-KW"/>
</dbReference>
<dbReference type="GO" id="GO:0005840">
    <property type="term" value="C:ribosome"/>
    <property type="evidence" value="ECO:0007669"/>
    <property type="project" value="UniProtKB-KW"/>
</dbReference>
<dbReference type="GO" id="GO:0003735">
    <property type="term" value="F:structural constituent of ribosome"/>
    <property type="evidence" value="ECO:0007669"/>
    <property type="project" value="InterPro"/>
</dbReference>
<dbReference type="GO" id="GO:0006412">
    <property type="term" value="P:translation"/>
    <property type="evidence" value="ECO:0007669"/>
    <property type="project" value="UniProtKB-UniRule"/>
</dbReference>
<dbReference type="Gene3D" id="2.20.28.120">
    <property type="entry name" value="Ribosomal protein L33"/>
    <property type="match status" value="1"/>
</dbReference>
<dbReference type="HAMAP" id="MF_00294">
    <property type="entry name" value="Ribosomal_bL33"/>
    <property type="match status" value="1"/>
</dbReference>
<dbReference type="InterPro" id="IPR001705">
    <property type="entry name" value="Ribosomal_bL33"/>
</dbReference>
<dbReference type="InterPro" id="IPR018264">
    <property type="entry name" value="Ribosomal_bL33_CS"/>
</dbReference>
<dbReference type="InterPro" id="IPR038584">
    <property type="entry name" value="Ribosomal_bL33_sf"/>
</dbReference>
<dbReference type="InterPro" id="IPR011332">
    <property type="entry name" value="Ribosomal_zn-bd"/>
</dbReference>
<dbReference type="NCBIfam" id="NF001764">
    <property type="entry name" value="PRK00504.1"/>
    <property type="match status" value="1"/>
</dbReference>
<dbReference type="NCBIfam" id="NF001860">
    <property type="entry name" value="PRK00595.1"/>
    <property type="match status" value="1"/>
</dbReference>
<dbReference type="NCBIfam" id="TIGR01023">
    <property type="entry name" value="rpmG_bact"/>
    <property type="match status" value="1"/>
</dbReference>
<dbReference type="PANTHER" id="PTHR43168">
    <property type="entry name" value="50S RIBOSOMAL PROTEIN L33, CHLOROPLASTIC"/>
    <property type="match status" value="1"/>
</dbReference>
<dbReference type="PANTHER" id="PTHR43168:SF2">
    <property type="entry name" value="LARGE RIBOSOMAL SUBUNIT PROTEIN BL33C"/>
    <property type="match status" value="1"/>
</dbReference>
<dbReference type="Pfam" id="PF00471">
    <property type="entry name" value="Ribosomal_L33"/>
    <property type="match status" value="1"/>
</dbReference>
<dbReference type="SUPFAM" id="SSF57829">
    <property type="entry name" value="Zn-binding ribosomal proteins"/>
    <property type="match status" value="1"/>
</dbReference>
<dbReference type="PROSITE" id="PS00582">
    <property type="entry name" value="RIBOSOMAL_L33"/>
    <property type="match status" value="1"/>
</dbReference>
<keyword id="KW-1185">Reference proteome</keyword>
<keyword id="KW-0687">Ribonucleoprotein</keyword>
<keyword id="KW-0689">Ribosomal protein</keyword>
<proteinExistence type="inferred from homology"/>
<accession>B0TC40</accession>
<comment type="similarity">
    <text evidence="1">Belongs to the bacterial ribosomal protein bL33 family.</text>
</comment>
<name>RL33_HELMI</name>
<protein>
    <recommendedName>
        <fullName evidence="1">Large ribosomal subunit protein bL33</fullName>
    </recommendedName>
    <alternativeName>
        <fullName evidence="2">50S ribosomal protein L33</fullName>
    </alternativeName>
</protein>
<sequence length="49" mass="5890">MRVGVALACTECKRRNYMTNKNKKNDPDRIELKKYCKWCKTQTVHKETK</sequence>